<organism>
    <name type="scientific">Danio rerio</name>
    <name type="common">Zebrafish</name>
    <name type="synonym">Brachydanio rerio</name>
    <dbReference type="NCBI Taxonomy" id="7955"/>
    <lineage>
        <taxon>Eukaryota</taxon>
        <taxon>Metazoa</taxon>
        <taxon>Chordata</taxon>
        <taxon>Craniata</taxon>
        <taxon>Vertebrata</taxon>
        <taxon>Euteleostomi</taxon>
        <taxon>Actinopterygii</taxon>
        <taxon>Neopterygii</taxon>
        <taxon>Teleostei</taxon>
        <taxon>Ostariophysi</taxon>
        <taxon>Cypriniformes</taxon>
        <taxon>Danionidae</taxon>
        <taxon>Danioninae</taxon>
        <taxon>Danio</taxon>
    </lineage>
</organism>
<reference key="1">
    <citation type="submission" date="2007-09" db="EMBL/GenBank/DDBJ databases">
        <authorList>
            <consortium name="NIH - Zebrafish Gene Collection (ZGC) project"/>
        </authorList>
    </citation>
    <scope>NUCLEOTIDE SEQUENCE [LARGE SCALE MRNA]</scope>
    <source>
        <tissue>Embryo</tissue>
    </source>
</reference>
<proteinExistence type="evidence at transcript level"/>
<name>SZ12A_DANRE</name>
<sequence>MAPQKHGSGGNGFYGNSASKAANGGAHASSGVVMTSVKRLKMEQIQADHQLFLEAFEKPTQIYRFLRTRNLITPIFLHRSLTYMSHRNSRTNSKRKSFSLNDLLFKVEKSKVDPESHNLASNLQLTFTGFFHKTEKQLQNSENEENSVSVEVLLVKLCHKKRKDVTCPVKQVPTGKKQVPLNPDISPTKLGAFPTLVVPSHEFEPVNSNTVKSYSLLFRASRPWGREHNGMTTRDTNVIEELSNRKKRYCSHQDDGETTFVAQMTVFDKNRRLQLLDGEYEVSMQEIEESPVGKKRATWETILDEKWVPPFETFSQGPTLQFTLRWTNDTADKATAPVAKPLATRNSESSTVDSSKTSNIKPPQAVAVNDSLGTDLPVRREQTHIEPCQKLHVYYQFLYNNNTRQQTEARDDLHCPWCTLNCRKLYSLLKHLKLSHSRFIFNYVPHPKGARIDVSINECYDGSYVGNPQDILCQPGFAFSRNGPVKRTPVTQILVCRPKRSKPSLSEFLEPEDGEQEQQRTYISGHNRLYFHSDSCTPLRPQEMEVDSEDERDPDWLREKTAMQIEEFTDVNEGEKEIMKLWNLLVMKHGFIADNQMNQACMSFVEQHGTIMVEKNLCRNALLHLINMHDFGLITTATIDKAMTHLRDLTQQSIAQH</sequence>
<keyword id="KW-0156">Chromatin regulator</keyword>
<keyword id="KW-0479">Metal-binding</keyword>
<keyword id="KW-0539">Nucleus</keyword>
<keyword id="KW-1185">Reference proteome</keyword>
<keyword id="KW-0678">Repressor</keyword>
<keyword id="KW-0804">Transcription</keyword>
<keyword id="KW-0805">Transcription regulation</keyword>
<keyword id="KW-0862">Zinc</keyword>
<keyword id="KW-0863">Zinc-finger</keyword>
<evidence type="ECO:0000250" key="1"/>
<evidence type="ECO:0000256" key="2">
    <source>
        <dbReference type="SAM" id="MobiDB-lite"/>
    </source>
</evidence>
<evidence type="ECO:0000305" key="3"/>
<gene>
    <name type="primary">suz12a</name>
    <name type="synonym">suz12</name>
    <name type="synonym">suz12l</name>
    <name type="ORF">zgc:100863</name>
</gene>
<comment type="function">
    <text evidence="1">Polycomb group (PcG) protein. Component of the prc2/eed-ezh2 complex, which methylates 'Lys-9' and 'Lys-27' of histone H3, leading to transcriptional repression of the affected target gene (By similarity).</text>
</comment>
<comment type="subunit">
    <text evidence="1">Component of the prc2/eed-ezh2 complex.</text>
</comment>
<comment type="subcellular location">
    <subcellularLocation>
        <location evidence="1">Nucleus</location>
    </subcellularLocation>
</comment>
<comment type="similarity">
    <text evidence="3">Belongs to the VEFS (VRN2-EMF2-FIS2-SU(Z)12) family.</text>
</comment>
<dbReference type="EMBL" id="BC078293">
    <property type="protein sequence ID" value="AAH78293.1"/>
    <property type="molecule type" value="mRNA"/>
</dbReference>
<dbReference type="EMBL" id="BC152625">
    <property type="protein sequence ID" value="AAI52626.1"/>
    <property type="molecule type" value="mRNA"/>
</dbReference>
<dbReference type="RefSeq" id="NP_001003529.1">
    <property type="nucleotide sequence ID" value="NM_001003529.2"/>
</dbReference>
<dbReference type="SMR" id="Q6DC03"/>
<dbReference type="FunCoup" id="Q6DC03">
    <property type="interactions" value="69"/>
</dbReference>
<dbReference type="STRING" id="7955.ENSDARP00000093727"/>
<dbReference type="PaxDb" id="7955-ENSDARP00000093727"/>
<dbReference type="GeneID" id="794171"/>
<dbReference type="KEGG" id="dre:794171"/>
<dbReference type="AGR" id="ZFIN:ZDB-GENE-040801-36"/>
<dbReference type="CTD" id="794171"/>
<dbReference type="ZFIN" id="ZDB-GENE-040801-36">
    <property type="gene designation" value="suz12a"/>
</dbReference>
<dbReference type="eggNOG" id="KOG2350">
    <property type="taxonomic scope" value="Eukaryota"/>
</dbReference>
<dbReference type="InParanoid" id="Q6DC03"/>
<dbReference type="OrthoDB" id="166746at2759"/>
<dbReference type="PhylomeDB" id="Q6DC03"/>
<dbReference type="PRO" id="PR:Q6DC03"/>
<dbReference type="Proteomes" id="UP000000437">
    <property type="component" value="Chromosome 3"/>
</dbReference>
<dbReference type="GO" id="GO:0035098">
    <property type="term" value="C:ESC/E(Z) complex"/>
    <property type="evidence" value="ECO:0000250"/>
    <property type="project" value="UniProtKB"/>
</dbReference>
<dbReference type="GO" id="GO:0005634">
    <property type="term" value="C:nucleus"/>
    <property type="evidence" value="ECO:0000318"/>
    <property type="project" value="GO_Central"/>
</dbReference>
<dbReference type="GO" id="GO:0016586">
    <property type="term" value="C:RSC-type complex"/>
    <property type="evidence" value="ECO:0000318"/>
    <property type="project" value="GO_Central"/>
</dbReference>
<dbReference type="GO" id="GO:0031490">
    <property type="term" value="F:chromatin DNA binding"/>
    <property type="evidence" value="ECO:0000318"/>
    <property type="project" value="GO_Central"/>
</dbReference>
<dbReference type="GO" id="GO:0008270">
    <property type="term" value="F:zinc ion binding"/>
    <property type="evidence" value="ECO:0007669"/>
    <property type="project" value="UniProtKB-KW"/>
</dbReference>
<dbReference type="GO" id="GO:0006325">
    <property type="term" value="P:chromatin organization"/>
    <property type="evidence" value="ECO:0007669"/>
    <property type="project" value="UniProtKB-KW"/>
</dbReference>
<dbReference type="CDD" id="cd21740">
    <property type="entry name" value="C2_II_SUZ12"/>
    <property type="match status" value="1"/>
</dbReference>
<dbReference type="CDD" id="cd21551">
    <property type="entry name" value="VEFS-box_SUZ12"/>
    <property type="match status" value="1"/>
</dbReference>
<dbReference type="CDD" id="cd21750">
    <property type="entry name" value="ZnB-Zn_SUZ12"/>
    <property type="match status" value="1"/>
</dbReference>
<dbReference type="InterPro" id="IPR019135">
    <property type="entry name" value="Polycomb_protein_VEFS-Box"/>
</dbReference>
<dbReference type="PANTHER" id="PTHR22597">
    <property type="entry name" value="POLYCOMB GROUP PROTEIN"/>
    <property type="match status" value="1"/>
</dbReference>
<dbReference type="PANTHER" id="PTHR22597:SF0">
    <property type="entry name" value="POLYCOMB PROTEIN SUZ12"/>
    <property type="match status" value="1"/>
</dbReference>
<dbReference type="Pfam" id="PF09733">
    <property type="entry name" value="VEFS-Box"/>
    <property type="match status" value="1"/>
</dbReference>
<dbReference type="Pfam" id="PF23320">
    <property type="entry name" value="Zn_SUZ12"/>
    <property type="match status" value="1"/>
</dbReference>
<dbReference type="PROSITE" id="PS00028">
    <property type="entry name" value="ZINC_FINGER_C2H2_1"/>
    <property type="match status" value="1"/>
</dbReference>
<protein>
    <recommendedName>
        <fullName>Polycomb protein suz12-A</fullName>
    </recommendedName>
    <alternativeName>
        <fullName>Suppressor of zeste 12 protein homolog A</fullName>
    </alternativeName>
</protein>
<accession>Q6DC03</accession>
<accession>A7YYE1</accession>
<feature type="chain" id="PRO_0000343752" description="Polycomb protein suz12-A">
    <location>
        <begin position="1"/>
        <end position="657"/>
    </location>
</feature>
<feature type="zinc finger region" description="C2H2-type">
    <location>
        <begin position="413"/>
        <end position="436"/>
    </location>
</feature>
<feature type="region of interest" description="Disordered" evidence="2">
    <location>
        <begin position="335"/>
        <end position="363"/>
    </location>
</feature>
<feature type="region of interest" description="VEFS-box">
    <location>
        <begin position="528"/>
        <end position="604"/>
    </location>
</feature>
<feature type="compositionally biased region" description="Low complexity" evidence="2">
    <location>
        <begin position="347"/>
        <end position="358"/>
    </location>
</feature>
<feature type="sequence conflict" description="In Ref. 1; AAI52626." evidence="3" ref="1">
    <original>H</original>
    <variation>R</variation>
    <location>
        <position position="252"/>
    </location>
</feature>
<feature type="sequence conflict" description="In Ref. 1; AAI52626." evidence="3" ref="1">
    <original>I</original>
    <variation>V</variation>
    <location>
        <position position="360"/>
    </location>
</feature>
<feature type="sequence conflict" description="In Ref. 1; AAI52626." evidence="3" ref="1">
    <original>HVY</original>
    <variation>RVC</variation>
    <location>
        <begin position="392"/>
        <end position="394"/>
    </location>
</feature>
<feature type="sequence conflict" description="In Ref. 1; AAI52626." evidence="3" ref="1">
    <original>D</original>
    <variation>E</variation>
    <location>
        <position position="411"/>
    </location>
</feature>
<feature type="sequence conflict" description="In Ref. 1; AAI52626." evidence="3" ref="1">
    <original>P</original>
    <variation>S</variation>
    <location>
        <position position="447"/>
    </location>
</feature>
<feature type="sequence conflict" description="In Ref. 1; AAI52626." evidence="3" ref="1">
    <original>H</original>
    <variation>D</variation>
    <location>
        <position position="657"/>
    </location>
</feature>